<protein>
    <recommendedName>
        <fullName>HTH-type transcriptional regulator NorG</fullName>
    </recommendedName>
</protein>
<dbReference type="EMBL" id="CP000255">
    <property type="protein sequence ID" value="ABD22343.1"/>
    <property type="status" value="ALT_INIT"/>
    <property type="molecule type" value="Genomic_DNA"/>
</dbReference>
<dbReference type="SMR" id="Q2FKF1"/>
<dbReference type="KEGG" id="saa:SAUSA300_0110"/>
<dbReference type="HOGENOM" id="CLU_017584_0_0_9"/>
<dbReference type="Proteomes" id="UP000001939">
    <property type="component" value="Chromosome"/>
</dbReference>
<dbReference type="GO" id="GO:0003677">
    <property type="term" value="F:DNA binding"/>
    <property type="evidence" value="ECO:0007669"/>
    <property type="project" value="UniProtKB-KW"/>
</dbReference>
<dbReference type="GO" id="GO:0003700">
    <property type="term" value="F:DNA-binding transcription factor activity"/>
    <property type="evidence" value="ECO:0007669"/>
    <property type="project" value="InterPro"/>
</dbReference>
<dbReference type="GO" id="GO:0030170">
    <property type="term" value="F:pyridoxal phosphate binding"/>
    <property type="evidence" value="ECO:0007669"/>
    <property type="project" value="InterPro"/>
</dbReference>
<dbReference type="GO" id="GO:0008483">
    <property type="term" value="F:transaminase activity"/>
    <property type="evidence" value="ECO:0007669"/>
    <property type="project" value="UniProtKB-KW"/>
</dbReference>
<dbReference type="GO" id="GO:1901605">
    <property type="term" value="P:alpha-amino acid metabolic process"/>
    <property type="evidence" value="ECO:0007669"/>
    <property type="project" value="TreeGrafter"/>
</dbReference>
<dbReference type="GO" id="GO:0009058">
    <property type="term" value="P:biosynthetic process"/>
    <property type="evidence" value="ECO:0007669"/>
    <property type="project" value="InterPro"/>
</dbReference>
<dbReference type="CDD" id="cd00609">
    <property type="entry name" value="AAT_like"/>
    <property type="match status" value="1"/>
</dbReference>
<dbReference type="CDD" id="cd07377">
    <property type="entry name" value="WHTH_GntR"/>
    <property type="match status" value="1"/>
</dbReference>
<dbReference type="FunFam" id="3.40.640.10:FF:000023">
    <property type="entry name" value="Transcriptional regulator, GntR family"/>
    <property type="match status" value="1"/>
</dbReference>
<dbReference type="Gene3D" id="3.90.1150.10">
    <property type="entry name" value="Aspartate Aminotransferase, domain 1"/>
    <property type="match status" value="1"/>
</dbReference>
<dbReference type="Gene3D" id="3.40.640.10">
    <property type="entry name" value="Type I PLP-dependent aspartate aminotransferase-like (Major domain)"/>
    <property type="match status" value="1"/>
</dbReference>
<dbReference type="Gene3D" id="1.10.10.10">
    <property type="entry name" value="Winged helix-like DNA-binding domain superfamily/Winged helix DNA-binding domain"/>
    <property type="match status" value="1"/>
</dbReference>
<dbReference type="InterPro" id="IPR004839">
    <property type="entry name" value="Aminotransferase_I/II_large"/>
</dbReference>
<dbReference type="InterPro" id="IPR050859">
    <property type="entry name" value="Class-I_PLP-dep_aminotransf"/>
</dbReference>
<dbReference type="InterPro" id="IPR015424">
    <property type="entry name" value="PyrdxlP-dep_Trfase"/>
</dbReference>
<dbReference type="InterPro" id="IPR015421">
    <property type="entry name" value="PyrdxlP-dep_Trfase_major"/>
</dbReference>
<dbReference type="InterPro" id="IPR015422">
    <property type="entry name" value="PyrdxlP-dep_Trfase_small"/>
</dbReference>
<dbReference type="InterPro" id="IPR000524">
    <property type="entry name" value="Tscrpt_reg_HTH_GntR"/>
</dbReference>
<dbReference type="InterPro" id="IPR036388">
    <property type="entry name" value="WH-like_DNA-bd_sf"/>
</dbReference>
<dbReference type="InterPro" id="IPR036390">
    <property type="entry name" value="WH_DNA-bd_sf"/>
</dbReference>
<dbReference type="PANTHER" id="PTHR42790">
    <property type="entry name" value="AMINOTRANSFERASE"/>
    <property type="match status" value="1"/>
</dbReference>
<dbReference type="PANTHER" id="PTHR42790:SF19">
    <property type="entry name" value="KYNURENINE_ALPHA-AMINOADIPATE AMINOTRANSFERASE, MITOCHONDRIAL"/>
    <property type="match status" value="1"/>
</dbReference>
<dbReference type="Pfam" id="PF00155">
    <property type="entry name" value="Aminotran_1_2"/>
    <property type="match status" value="1"/>
</dbReference>
<dbReference type="Pfam" id="PF00392">
    <property type="entry name" value="GntR"/>
    <property type="match status" value="1"/>
</dbReference>
<dbReference type="PRINTS" id="PR00035">
    <property type="entry name" value="HTHGNTR"/>
</dbReference>
<dbReference type="SMART" id="SM00345">
    <property type="entry name" value="HTH_GNTR"/>
    <property type="match status" value="1"/>
</dbReference>
<dbReference type="SUPFAM" id="SSF53383">
    <property type="entry name" value="PLP-dependent transferases"/>
    <property type="match status" value="1"/>
</dbReference>
<dbReference type="SUPFAM" id="SSF46785">
    <property type="entry name" value="Winged helix' DNA-binding domain"/>
    <property type="match status" value="1"/>
</dbReference>
<dbReference type="PROSITE" id="PS50949">
    <property type="entry name" value="HTH_GNTR"/>
    <property type="match status" value="1"/>
</dbReference>
<comment type="function">
    <text evidence="1">Positively regulates the expression of the NorB efflux pump and negatively regulates the expression of the AbcA efflux pump. Binds specifically to the promoters of norA, norB and norC and abcA genes. Could also have an aminotransferase activity (By similarity).</text>
</comment>
<comment type="cofactor">
    <cofactor evidence="3">
        <name>pyridoxal 5'-phosphate</name>
        <dbReference type="ChEBI" id="CHEBI:597326"/>
    </cofactor>
</comment>
<comment type="similarity">
    <text evidence="3">In the C-terminal section; belongs to the class-I pyridoxal-phosphate-dependent aminotransferase family.</text>
</comment>
<comment type="sequence caution" evidence="3">
    <conflict type="erroneous initiation">
        <sequence resource="EMBL-CDS" id="ABD22343"/>
    </conflict>
</comment>
<keyword id="KW-0010">Activator</keyword>
<keyword id="KW-0032">Aminotransferase</keyword>
<keyword id="KW-0238">DNA-binding</keyword>
<keyword id="KW-0663">Pyridoxal phosphate</keyword>
<keyword id="KW-0678">Repressor</keyword>
<keyword id="KW-0804">Transcription</keyword>
<keyword id="KW-0805">Transcription regulation</keyword>
<keyword id="KW-0808">Transferase</keyword>
<name>NORG_STAA3</name>
<feature type="initiator methionine" description="Removed" evidence="1">
    <location>
        <position position="1"/>
    </location>
</feature>
<feature type="chain" id="PRO_0000305324" description="HTH-type transcriptional regulator NorG">
    <location>
        <begin position="2"/>
        <end position="442"/>
    </location>
</feature>
<feature type="domain" description="HTH gntR-type" evidence="2">
    <location>
        <begin position="2"/>
        <end position="46"/>
    </location>
</feature>
<feature type="DNA-binding region" description="H-T-H motif" evidence="2">
    <location>
        <begin position="6"/>
        <end position="25"/>
    </location>
</feature>
<feature type="modified residue" description="N6-(pyridoxal phosphate)lysine" evidence="1">
    <location>
        <position position="288"/>
    </location>
</feature>
<proteinExistence type="inferred from homology"/>
<evidence type="ECO:0000250" key="1"/>
<evidence type="ECO:0000255" key="2">
    <source>
        <dbReference type="PROSITE-ProRule" id="PRU00307"/>
    </source>
</evidence>
<evidence type="ECO:0000305" key="3"/>
<sequence length="442" mass="51303">MKIPSHRQLAIQYNVNRVTIIKSIELLEAEGFIYTKVGSGTYVNDYLNEAHITNKWSEMMLWSSQQRSQYTVQLINKIETDDSYIHISKGELGISLMPHIQLKKAMSNTASHIEDLSFGYNNGYGYIKLRDIIVERMSKQGINVGRENVMITSGALHAIQLLSIGFLGQDAIIISNTPSYIHSTNVFEQLNFRHIDVPYNQINEIDTIIDRFINFKNKAIYIEPRFNNPTGRSLTNEQKKNIITYSERHNIPIIEDDIFRDIFFSDPTPSIKTYDKLGKVIHISSFSKTIAPAIRIGWIVASEKIIEQLADVRMQIDYGSSILSQMVVYEMLKNKSYDKHLVKLRYVLKDKRDFMLNILNNLFKDIAHWEVPSGGYFVWLVFKIDIDIKYLFYELLSKEKILINPGYIYGSKEKSIRLSFAFESNENIKHALYKIYTYVKKV</sequence>
<gene>
    <name type="primary">norG</name>
    <name type="ordered locus">SAUSA300_0110</name>
</gene>
<organism>
    <name type="scientific">Staphylococcus aureus (strain USA300)</name>
    <dbReference type="NCBI Taxonomy" id="367830"/>
    <lineage>
        <taxon>Bacteria</taxon>
        <taxon>Bacillati</taxon>
        <taxon>Bacillota</taxon>
        <taxon>Bacilli</taxon>
        <taxon>Bacillales</taxon>
        <taxon>Staphylococcaceae</taxon>
        <taxon>Staphylococcus</taxon>
    </lineage>
</organism>
<reference key="1">
    <citation type="journal article" date="2006" name="Lancet">
        <title>Complete genome sequence of USA300, an epidemic clone of community-acquired meticillin-resistant Staphylococcus aureus.</title>
        <authorList>
            <person name="Diep B.A."/>
            <person name="Gill S.R."/>
            <person name="Chang R.F."/>
            <person name="Phan T.H."/>
            <person name="Chen J.H."/>
            <person name="Davidson M.G."/>
            <person name="Lin F."/>
            <person name="Lin J."/>
            <person name="Carleton H.A."/>
            <person name="Mongodin E.F."/>
            <person name="Sensabaugh G.F."/>
            <person name="Perdreau-Remington F."/>
        </authorList>
    </citation>
    <scope>NUCLEOTIDE SEQUENCE [LARGE SCALE GENOMIC DNA]</scope>
    <source>
        <strain>USA300</strain>
    </source>
</reference>
<accession>Q2FKF1</accession>